<gene>
    <name type="primary">ERVPABLB-1</name>
</gene>
<reference key="1">
    <citation type="journal article" date="2006" name="Nature">
        <title>The DNA sequence, annotation and analysis of human chromosome 3.</title>
        <authorList>
            <person name="Muzny D.M."/>
            <person name="Scherer S.E."/>
            <person name="Kaul R."/>
            <person name="Wang J."/>
            <person name="Yu J."/>
            <person name="Sudbrak R."/>
            <person name="Buhay C.J."/>
            <person name="Chen R."/>
            <person name="Cree A."/>
            <person name="Ding Y."/>
            <person name="Dugan-Rocha S."/>
            <person name="Gill R."/>
            <person name="Gunaratne P."/>
            <person name="Harris R.A."/>
            <person name="Hawes A.C."/>
            <person name="Hernandez J."/>
            <person name="Hodgson A.V."/>
            <person name="Hume J."/>
            <person name="Jackson A."/>
            <person name="Khan Z.M."/>
            <person name="Kovar-Smith C."/>
            <person name="Lewis L.R."/>
            <person name="Lozado R.J."/>
            <person name="Metzker M.L."/>
            <person name="Milosavljevic A."/>
            <person name="Miner G.R."/>
            <person name="Morgan M.B."/>
            <person name="Nazareth L.V."/>
            <person name="Scott G."/>
            <person name="Sodergren E."/>
            <person name="Song X.-Z."/>
            <person name="Steffen D."/>
            <person name="Wei S."/>
            <person name="Wheeler D.A."/>
            <person name="Wright M.W."/>
            <person name="Worley K.C."/>
            <person name="Yuan Y."/>
            <person name="Zhang Z."/>
            <person name="Adams C.Q."/>
            <person name="Ansari-Lari M.A."/>
            <person name="Ayele M."/>
            <person name="Brown M.J."/>
            <person name="Chen G."/>
            <person name="Chen Z."/>
            <person name="Clendenning J."/>
            <person name="Clerc-Blankenburg K.P."/>
            <person name="Chen R."/>
            <person name="Chen Z."/>
            <person name="Davis C."/>
            <person name="Delgado O."/>
            <person name="Dinh H.H."/>
            <person name="Dong W."/>
            <person name="Draper H."/>
            <person name="Ernst S."/>
            <person name="Fu G."/>
            <person name="Gonzalez-Garay M.L."/>
            <person name="Garcia D.K."/>
            <person name="Gillett W."/>
            <person name="Gu J."/>
            <person name="Hao B."/>
            <person name="Haugen E."/>
            <person name="Havlak P."/>
            <person name="He X."/>
            <person name="Hennig S."/>
            <person name="Hu S."/>
            <person name="Huang W."/>
            <person name="Jackson L.R."/>
            <person name="Jacob L.S."/>
            <person name="Kelly S.H."/>
            <person name="Kube M."/>
            <person name="Levy R."/>
            <person name="Li Z."/>
            <person name="Liu B."/>
            <person name="Liu J."/>
            <person name="Liu W."/>
            <person name="Lu J."/>
            <person name="Maheshwari M."/>
            <person name="Nguyen B.-V."/>
            <person name="Okwuonu G.O."/>
            <person name="Palmeiri A."/>
            <person name="Pasternak S."/>
            <person name="Perez L.M."/>
            <person name="Phelps K.A."/>
            <person name="Plopper F.J."/>
            <person name="Qiang B."/>
            <person name="Raymond C."/>
            <person name="Rodriguez R."/>
            <person name="Saenphimmachak C."/>
            <person name="Santibanez J."/>
            <person name="Shen H."/>
            <person name="Shen Y."/>
            <person name="Subramanian S."/>
            <person name="Tabor P.E."/>
            <person name="Verduzco D."/>
            <person name="Waldron L."/>
            <person name="Wang J."/>
            <person name="Wang J."/>
            <person name="Wang Q."/>
            <person name="Williams G.A."/>
            <person name="Wong G.K.-S."/>
            <person name="Yao Z."/>
            <person name="Zhang J."/>
            <person name="Zhang X."/>
            <person name="Zhao G."/>
            <person name="Zhou J."/>
            <person name="Zhou Y."/>
            <person name="Nelson D."/>
            <person name="Lehrach H."/>
            <person name="Reinhardt R."/>
            <person name="Naylor S.L."/>
            <person name="Yang H."/>
            <person name="Olson M."/>
            <person name="Weinstock G."/>
            <person name="Gibbs R.A."/>
        </authorList>
    </citation>
    <scope>NUCLEOTIDE SEQUENCE [LARGE SCALE GENOMIC DNA]</scope>
</reference>
<reference key="2">
    <citation type="journal article" date="2003" name="Proc. Natl. Acad. Sci. U.S.A.">
        <title>Genomewide screening for fusogenic human endogenous retrovirus envelopes identifies syncytin 2, a gene conserved on primate evolution.</title>
        <authorList>
            <person name="Blaise S."/>
            <person name="de Parseval N."/>
            <person name="Benit L."/>
            <person name="Heidmann T."/>
        </authorList>
    </citation>
    <scope>FUNCTION</scope>
</reference>
<reference key="3">
    <citation type="journal article" date="2003" name="J. Virol.">
        <title>Survey of human genes of retroviral origin: identification and transcriptome of the genes with coding capacity for complete envelope proteins.</title>
        <authorList>
            <person name="de Parseval N."/>
            <person name="Lazar V."/>
            <person name="Casella J.-F."/>
            <person name="Benit L."/>
            <person name="Heidmann T."/>
        </authorList>
    </citation>
    <scope>TISSUE SPECIFICITY</scope>
</reference>
<comment type="function">
    <text evidence="4">Retroviral envelope proteins mediate receptor recognition and membrane fusion during early infection. Endogenous envelope proteins may have kept, lost or modified their original function during evolution. This endogenous envelope protein has lost its original fusogenic properties.</text>
</comment>
<comment type="subcellular location">
    <subcellularLocation>
        <location evidence="5">Cell membrane</location>
        <topology evidence="5">Single-pass membrane protein</topology>
    </subcellularLocation>
    <text evidence="5">At the origin, this retroviral envelope protein was localized in the virion.</text>
</comment>
<comment type="tissue specificity">
    <text evidence="3">Low expression in placenta and testis.</text>
</comment>
<comment type="domain">
    <text evidence="1">Contains the CKS-17 immunosuppressive domain present in many retroviral envelope proteins. As a synthetic peptide, it inhibits immune function in vitro and in vivo (By similarity).</text>
</comment>
<comment type="PTM">
    <text evidence="1">The CXXC motif is highly conserved across a broad range of retroviral envelope proteins. It is thought to participate in the formation of a labile disulfide bond possibly with the CX6CC motif present in the transmembrane domain (By similarity).</text>
</comment>
<comment type="similarity">
    <text evidence="5">Belongs to the gamma type-C retroviral envelope protein family. HERV class-I R(b) env subfamily.</text>
</comment>
<comment type="caution">
    <text evidence="5">The cleavage site does not match the consensus.</text>
</comment>
<comment type="caution">
    <text evidence="5">CKS-17 sequence does not match the minimal active consensus.</text>
</comment>
<proteinExistence type="evidence at transcript level"/>
<sequence length="514" mass="58521">MDPLHTIEKVPARRNIHDRGHQGHRMGDGTPGRPKISVQQMTRFSLIIFFLSAPFVVNASTSNVFLQWAHSYADGLQQGDPCWVCGSLPVTNTMELPWWVSPLQGKDWVFFQSFIGDLKQWTGAQMTGVTRKNISEWPINKTLNEPGHDKPFSVNETRDKVIAFAIPLLDTKVFVQTSRPQNTQYRNGFLQIWDGFIWLTATKGHLSQIAPLCWEQRNHSLDNWPNTTRVMGWIPPGQCRHTILLQQRDLFATDWSQQPGLNWYAPNGTQWLCSPNLWPWLPSGWLGCCTLGIPWAQGRWVKTMEVYPYLPHVVNQGTRAIVHRNDHLPTIFMPSVGLGTVIQHIEALANFTQRALNDSLQSISLMNAEVYYMHEDILQNRMALDILTAAEGGTCALIKTECCVYIPNNSRNISLALEDTCRQIQVISSSALSLHDWIASQFSGRPSWWQKILIVLATLWSVGIALCCGLYFCRMFSQHIPQTHSIIFQQELPLSPPSQEHYQSQRDIFHSNAP</sequence>
<name>ERB1_HUMAN</name>
<dbReference type="EMBL" id="AC093488">
    <property type="status" value="NOT_ANNOTATED_CDS"/>
    <property type="molecule type" value="Genomic_DNA"/>
</dbReference>
<dbReference type="RefSeq" id="XP_016863101.1">
    <property type="nucleotide sequence ID" value="XM_017007612.1"/>
</dbReference>
<dbReference type="RefSeq" id="XP_016863102.1">
    <property type="nucleotide sequence ID" value="XM_017007613.1"/>
</dbReference>
<dbReference type="RefSeq" id="XP_016863103.1">
    <property type="nucleotide sequence ID" value="XM_017007614.1"/>
</dbReference>
<dbReference type="SMR" id="P60509"/>
<dbReference type="GlyCosmos" id="P60509">
    <property type="glycosylation" value="11 sites, No reported glycans"/>
</dbReference>
<dbReference type="GlyGen" id="P60509">
    <property type="glycosylation" value="11 sites"/>
</dbReference>
<dbReference type="BioMuta" id="HGNC:39042"/>
<dbReference type="DMDM" id="44887882"/>
<dbReference type="jPOST" id="P60509"/>
<dbReference type="GeneCards" id="ERVPABLB-1"/>
<dbReference type="HGNC" id="HGNC:39042">
    <property type="gene designation" value="ERVPABLB-1"/>
</dbReference>
<dbReference type="neXtProt" id="NX_P60509"/>
<dbReference type="InParanoid" id="P60509"/>
<dbReference type="PAN-GO" id="P60509">
    <property type="GO annotations" value="0 GO annotations based on evolutionary models"/>
</dbReference>
<dbReference type="BioGRID-ORCS" id="105377641">
    <property type="hits" value="0 hits in 1 CRISPR screen"/>
</dbReference>
<dbReference type="Pharos" id="P60509">
    <property type="development level" value="Tdark"/>
</dbReference>
<dbReference type="PRO" id="PR:P60509"/>
<dbReference type="Proteomes" id="UP000005640">
    <property type="component" value="Unplaced"/>
</dbReference>
<dbReference type="RNAct" id="P60509">
    <property type="molecule type" value="protein"/>
</dbReference>
<dbReference type="GO" id="GO:0005886">
    <property type="term" value="C:plasma membrane"/>
    <property type="evidence" value="ECO:0007669"/>
    <property type="project" value="UniProtKB-SubCell"/>
</dbReference>
<dbReference type="CDD" id="cd09951">
    <property type="entry name" value="HERV-Rb-like_HR1-HR2"/>
    <property type="match status" value="1"/>
</dbReference>
<dbReference type="Gene3D" id="1.10.287.210">
    <property type="match status" value="1"/>
</dbReference>
<dbReference type="InterPro" id="IPR018154">
    <property type="entry name" value="TLV/ENV_coat_polyprotein"/>
</dbReference>
<dbReference type="PANTHER" id="PTHR10424:SF8">
    <property type="entry name" value="ENDOGENOUS RETROVIRUS GROUP PABLB MEMBER 1 ENV POLYPROTEIN"/>
    <property type="match status" value="1"/>
</dbReference>
<dbReference type="PANTHER" id="PTHR10424">
    <property type="entry name" value="VIRAL ENVELOPE PROTEIN"/>
    <property type="match status" value="1"/>
</dbReference>
<dbReference type="Pfam" id="PF00429">
    <property type="entry name" value="TLV_coat"/>
    <property type="match status" value="1"/>
</dbReference>
<dbReference type="SUPFAM" id="SSF58069">
    <property type="entry name" value="Virus ectodomain"/>
    <property type="match status" value="1"/>
</dbReference>
<accession>P60509</accession>
<organism>
    <name type="scientific">Homo sapiens</name>
    <name type="common">Human</name>
    <dbReference type="NCBI Taxonomy" id="9606"/>
    <lineage>
        <taxon>Eukaryota</taxon>
        <taxon>Metazoa</taxon>
        <taxon>Chordata</taxon>
        <taxon>Craniata</taxon>
        <taxon>Vertebrata</taxon>
        <taxon>Euteleostomi</taxon>
        <taxon>Mammalia</taxon>
        <taxon>Eutheria</taxon>
        <taxon>Euarchontoglires</taxon>
        <taxon>Primates</taxon>
        <taxon>Haplorrhini</taxon>
        <taxon>Catarrhini</taxon>
        <taxon>Hominidae</taxon>
        <taxon>Homo</taxon>
    </lineage>
</organism>
<protein>
    <recommendedName>
        <fullName>Endogenous retrovirus group PABLB member 1 Env polyprotein</fullName>
    </recommendedName>
    <alternativeName>
        <fullName>Endogenous retrovirus group PABLB member 1</fullName>
    </alternativeName>
    <alternativeName>
        <fullName>Envelope polyprotein</fullName>
    </alternativeName>
    <alternativeName>
        <fullName>HERV-R(b) Env protein</fullName>
    </alternativeName>
    <alternativeName>
        <fullName>HERV-R(b)_3p24.3 provirus ancestral Env polyprotein</fullName>
    </alternativeName>
    <domain>
        <recommendedName>
            <fullName>Surface protein domain</fullName>
            <shortName>SU</shortName>
        </recommendedName>
    </domain>
    <domain>
        <recommendedName>
            <fullName>Transmembrane protein domain</fullName>
            <shortName>TM</shortName>
        </recommendedName>
    </domain>
</protein>
<feature type="chain" id="PRO_0000008480" description="Endogenous retrovirus group PABLB member 1 Env polyprotein">
    <location>
        <begin position="1"/>
        <end position="514"/>
    </location>
</feature>
<feature type="transmembrane region" description="Helical" evidence="2">
    <location>
        <begin position="452"/>
        <end position="472"/>
    </location>
</feature>
<feature type="region of interest" description="Surface protein" evidence="1">
    <location>
        <begin position="60"/>
        <end position="316"/>
    </location>
</feature>
<feature type="region of interest" description="Transmembrane protein" evidence="1">
    <location>
        <begin position="317"/>
        <end position="514"/>
    </location>
</feature>
<feature type="region of interest" description="Fusion peptide" evidence="1">
    <location>
        <begin position="328"/>
        <end position="348"/>
    </location>
</feature>
<feature type="short sequence motif" description="CXXC" evidence="1">
    <location>
        <begin position="82"/>
        <end position="85"/>
    </location>
</feature>
<feature type="short sequence motif" description="CKS-17" evidence="1">
    <location>
        <begin position="378"/>
        <end position="394"/>
    </location>
</feature>
<feature type="short sequence motif" description="CX6CC" evidence="1">
    <location>
        <begin position="395"/>
        <end position="403"/>
    </location>
</feature>
<feature type="site" description="Ancestral cleavage site" evidence="2">
    <location>
        <begin position="316"/>
        <end position="317"/>
    </location>
</feature>
<feature type="glycosylation site" description="N-linked (GlcNAc...) asparagine" evidence="2">
    <location>
        <position position="58"/>
    </location>
</feature>
<feature type="glycosylation site" description="N-linked (GlcNAc...) asparagine" evidence="2">
    <location>
        <position position="133"/>
    </location>
</feature>
<feature type="glycosylation site" description="N-linked (GlcNAc...) asparagine" evidence="2">
    <location>
        <position position="140"/>
    </location>
</feature>
<feature type="glycosylation site" description="N-linked (GlcNAc...) asparagine" evidence="2">
    <location>
        <position position="155"/>
    </location>
</feature>
<feature type="glycosylation site" description="N-linked (GlcNAc...) asparagine" evidence="2">
    <location>
        <position position="218"/>
    </location>
</feature>
<feature type="glycosylation site" description="N-linked (GlcNAc...) asparagine" evidence="2">
    <location>
        <position position="226"/>
    </location>
</feature>
<feature type="glycosylation site" description="N-linked (GlcNAc...) asparagine" evidence="2">
    <location>
        <position position="267"/>
    </location>
</feature>
<feature type="glycosylation site" description="N-linked (GlcNAc...) asparagine" evidence="2">
    <location>
        <position position="350"/>
    </location>
</feature>
<feature type="glycosylation site" description="N-linked (GlcNAc...) asparagine" evidence="2">
    <location>
        <position position="357"/>
    </location>
</feature>
<feature type="glycosylation site" description="N-linked (GlcNAc...) asparagine" evidence="2">
    <location>
        <position position="408"/>
    </location>
</feature>
<feature type="glycosylation site" description="N-linked (GlcNAc...) asparagine" evidence="2">
    <location>
        <position position="412"/>
    </location>
</feature>
<feature type="disulfide bond" evidence="1">
    <location>
        <begin position="395"/>
        <end position="402"/>
    </location>
</feature>
<keyword id="KW-1003">Cell membrane</keyword>
<keyword id="KW-1015">Disulfide bond</keyword>
<keyword id="KW-0895">ERV</keyword>
<keyword id="KW-0325">Glycoprotein</keyword>
<keyword id="KW-0472">Membrane</keyword>
<keyword id="KW-1185">Reference proteome</keyword>
<keyword id="KW-0812">Transmembrane</keyword>
<keyword id="KW-1133">Transmembrane helix</keyword>
<keyword id="KW-0814">Transposable element</keyword>
<evidence type="ECO:0000250" key="1"/>
<evidence type="ECO:0000255" key="2"/>
<evidence type="ECO:0000269" key="3">
    <source>
    </source>
</evidence>
<evidence type="ECO:0000269" key="4">
    <source>
    </source>
</evidence>
<evidence type="ECO:0000305" key="5"/>